<accession>C1L1P3</accession>
<feature type="chain" id="PRO_1000212073" description="D-alanyl carrier protein">
    <location>
        <begin position="1"/>
        <end position="78"/>
    </location>
</feature>
<feature type="domain" description="Carrier" evidence="1">
    <location>
        <begin position="1"/>
        <end position="78"/>
    </location>
</feature>
<feature type="modified residue" description="O-(pantetheine 4'-phosphoryl)serine" evidence="1">
    <location>
        <position position="36"/>
    </location>
</feature>
<protein>
    <recommendedName>
        <fullName evidence="1">D-alanyl carrier protein</fullName>
        <shortName evidence="1">DCP</shortName>
    </recommendedName>
    <alternativeName>
        <fullName evidence="1">D-alanine--poly(phosphoribitol) ligase subunit 2</fullName>
    </alternativeName>
</protein>
<comment type="function">
    <text evidence="1">Carrier protein involved in the D-alanylation of lipoteichoic acid (LTA). The loading of thioester-linked D-alanine onto DltC is catalyzed by D-alanine--D-alanyl carrier protein ligase DltA. The DltC-carried D-alanyl group is further transferred to cell membrane phosphatidylglycerol (PG) by forming an ester bond, probably catalyzed by DltD. D-alanylation of LTA plays an important role in modulating the properties of the cell wall in Gram-positive bacteria, influencing the net charge of the cell wall.</text>
</comment>
<comment type="pathway">
    <text evidence="1">Cell wall biogenesis; lipoteichoic acid biosynthesis.</text>
</comment>
<comment type="subcellular location">
    <subcellularLocation>
        <location evidence="1">Cytoplasm</location>
    </subcellularLocation>
</comment>
<comment type="PTM">
    <text evidence="1">4'-phosphopantetheine is transferred from CoA to a specific serine of apo-DCP.</text>
</comment>
<comment type="similarity">
    <text evidence="1">Belongs to the DltC family.</text>
</comment>
<name>DLTC_LISMC</name>
<keyword id="KW-0961">Cell wall biogenesis/degradation</keyword>
<keyword id="KW-0963">Cytoplasm</keyword>
<keyword id="KW-0596">Phosphopantetheine</keyword>
<keyword id="KW-0597">Phosphoprotein</keyword>
<evidence type="ECO:0000255" key="1">
    <source>
        <dbReference type="HAMAP-Rule" id="MF_00565"/>
    </source>
</evidence>
<sequence length="78" mass="9010">MAFRENVLEILEEITETDEVVQNTNIKLFDEGLLDSMATVQLLIEIEEKLDITVPVSEFDRDEWATPEMIITQLEALK</sequence>
<gene>
    <name evidence="1" type="primary">dltC</name>
    <name type="ordered locus">Lm4b_00992</name>
</gene>
<proteinExistence type="inferred from homology"/>
<dbReference type="EMBL" id="FM242711">
    <property type="protein sequence ID" value="CAS04758.1"/>
    <property type="molecule type" value="Genomic_DNA"/>
</dbReference>
<dbReference type="RefSeq" id="WP_003722794.1">
    <property type="nucleotide sequence ID" value="NC_012488.1"/>
</dbReference>
<dbReference type="SMR" id="C1L1P3"/>
<dbReference type="GeneID" id="93238854"/>
<dbReference type="KEGG" id="lmc:Lm4b_00992"/>
<dbReference type="HOGENOM" id="CLU_108696_19_0_9"/>
<dbReference type="UniPathway" id="UPA00556"/>
<dbReference type="GO" id="GO:0005737">
    <property type="term" value="C:cytoplasm"/>
    <property type="evidence" value="ECO:0007669"/>
    <property type="project" value="UniProtKB-SubCell"/>
</dbReference>
<dbReference type="GO" id="GO:0036370">
    <property type="term" value="F:D-alanyl carrier activity"/>
    <property type="evidence" value="ECO:0007669"/>
    <property type="project" value="UniProtKB-UniRule"/>
</dbReference>
<dbReference type="GO" id="GO:0071555">
    <property type="term" value="P:cell wall organization"/>
    <property type="evidence" value="ECO:0007669"/>
    <property type="project" value="UniProtKB-KW"/>
</dbReference>
<dbReference type="GO" id="GO:0070395">
    <property type="term" value="P:lipoteichoic acid biosynthetic process"/>
    <property type="evidence" value="ECO:0007669"/>
    <property type="project" value="UniProtKB-UniRule"/>
</dbReference>
<dbReference type="FunFam" id="1.10.1200.10:FF:000004">
    <property type="entry name" value="D-alanyl carrier protein"/>
    <property type="match status" value="1"/>
</dbReference>
<dbReference type="Gene3D" id="1.10.1200.10">
    <property type="entry name" value="ACP-like"/>
    <property type="match status" value="1"/>
</dbReference>
<dbReference type="HAMAP" id="MF_00565">
    <property type="entry name" value="DltC"/>
    <property type="match status" value="1"/>
</dbReference>
<dbReference type="InterPro" id="IPR036736">
    <property type="entry name" value="ACP-like_sf"/>
</dbReference>
<dbReference type="InterPro" id="IPR003230">
    <property type="entry name" value="DltC"/>
</dbReference>
<dbReference type="InterPro" id="IPR009081">
    <property type="entry name" value="PP-bd_ACP"/>
</dbReference>
<dbReference type="NCBIfam" id="TIGR01688">
    <property type="entry name" value="dltC"/>
    <property type="match status" value="1"/>
</dbReference>
<dbReference type="NCBIfam" id="NF003464">
    <property type="entry name" value="PRK05087.1"/>
    <property type="match status" value="1"/>
</dbReference>
<dbReference type="Pfam" id="PF00550">
    <property type="entry name" value="PP-binding"/>
    <property type="match status" value="1"/>
</dbReference>
<dbReference type="SUPFAM" id="SSF47336">
    <property type="entry name" value="ACP-like"/>
    <property type="match status" value="1"/>
</dbReference>
<dbReference type="PROSITE" id="PS50075">
    <property type="entry name" value="CARRIER"/>
    <property type="match status" value="1"/>
</dbReference>
<organism>
    <name type="scientific">Listeria monocytogenes serotype 4b (strain CLIP80459)</name>
    <dbReference type="NCBI Taxonomy" id="568819"/>
    <lineage>
        <taxon>Bacteria</taxon>
        <taxon>Bacillati</taxon>
        <taxon>Bacillota</taxon>
        <taxon>Bacilli</taxon>
        <taxon>Bacillales</taxon>
        <taxon>Listeriaceae</taxon>
        <taxon>Listeria</taxon>
    </lineage>
</organism>
<reference key="1">
    <citation type="journal article" date="2012" name="BMC Genomics">
        <title>Comparative genomics and transcriptomics of lineages I, II, and III strains of Listeria monocytogenes.</title>
        <authorList>
            <person name="Hain T."/>
            <person name="Ghai R."/>
            <person name="Billion A."/>
            <person name="Kuenne C.T."/>
            <person name="Steinweg C."/>
            <person name="Izar B."/>
            <person name="Mohamed W."/>
            <person name="Mraheil M."/>
            <person name="Domann E."/>
            <person name="Schaffrath S."/>
            <person name="Karst U."/>
            <person name="Goesmann A."/>
            <person name="Oehm S."/>
            <person name="Puhler A."/>
            <person name="Merkl R."/>
            <person name="Vorwerk S."/>
            <person name="Glaser P."/>
            <person name="Garrido P."/>
            <person name="Rusniok C."/>
            <person name="Buchrieser C."/>
            <person name="Goebel W."/>
            <person name="Chakraborty T."/>
        </authorList>
    </citation>
    <scope>NUCLEOTIDE SEQUENCE [LARGE SCALE GENOMIC DNA]</scope>
    <source>
        <strain>CLIP80459</strain>
    </source>
</reference>